<organism>
    <name type="scientific">Haemophilus ducreyi (strain 35000HP / ATCC 700724)</name>
    <dbReference type="NCBI Taxonomy" id="233412"/>
    <lineage>
        <taxon>Bacteria</taxon>
        <taxon>Pseudomonadati</taxon>
        <taxon>Pseudomonadota</taxon>
        <taxon>Gammaproteobacteria</taxon>
        <taxon>Pasteurellales</taxon>
        <taxon>Pasteurellaceae</taxon>
        <taxon>Haemophilus</taxon>
    </lineage>
</organism>
<accession>Q7VPM2</accession>
<comment type="function">
    <text evidence="1">Required for the insertion and/or proper folding and/or complex formation of integral membrane proteins into the membrane. Involved in integration of membrane proteins that insert both dependently and independently of the Sec translocase complex, as well as at least some lipoproteins. Aids folding of multispanning membrane proteins.</text>
</comment>
<comment type="subunit">
    <text evidence="1">Interacts with the Sec translocase complex via SecD. Specifically interacts with transmembrane segments of nascent integral membrane proteins during membrane integration.</text>
</comment>
<comment type="subcellular location">
    <subcellularLocation>
        <location evidence="1">Cell inner membrane</location>
        <topology evidence="1">Multi-pass membrane protein</topology>
    </subcellularLocation>
</comment>
<comment type="similarity">
    <text evidence="1">Belongs to the OXA1/ALB3/YidC family. Type 1 subfamily.</text>
</comment>
<sequence length="536" mass="60677">MNSNRSLLVMGLLLVSFLIFTQWQQDFNPEIQAQKQAQQQSRDVPHATNTANAITEHMTKGKTITVESDVLRLVIDTLGGDVIESDLLAHKASLDSTDPLKLLTTEGLIYTAQSGLVGKNGIDTHIGRAPYQVTQDHFTLAKGQNEIVVPMTFEQDGVMYTKTFTLKRGSYDVAVSFDIQNNSANTIEVQPYGQIKHSLLDSSGNLAMPTYTGGAYSSSETNYKKYSFDEMTKANLNIDTKGGWVALLQHYFVSAWVPNQDASNTLYSRTHNGVATIGYRGPITTVKPNTKTTITSQLWTGPKDQKEMAQAATHLELTVDYGWAWFIAKPLFWLLIFIHSIIGNWGLAIMGVTLVVKSLLYPLTKAQYTSMAKMRMLQPKLQELRERYGDDRQQMSQEMMKLYKQEKVNPMGGCLPLILQMPIFIALYWTFMEAVELRHAPFFGWIQDLSAQDPYYIFPVLMGLSMFLLQKMSPTAVADPTQLKVMTFMPVIFTVFFLWFPSGLVLYWLTSNCITIVQQWLIYRNLEKKGLHTRKK</sequence>
<gene>
    <name evidence="1" type="primary">yidC</name>
    <name type="ordered locus">HD_0040</name>
</gene>
<reference key="1">
    <citation type="submission" date="2003-06" db="EMBL/GenBank/DDBJ databases">
        <title>The complete genome sequence of Haemophilus ducreyi.</title>
        <authorList>
            <person name="Munson R.S. Jr."/>
            <person name="Ray W.C."/>
            <person name="Mahairas G."/>
            <person name="Sabo P."/>
            <person name="Mungur R."/>
            <person name="Johnson L."/>
            <person name="Nguyen D."/>
            <person name="Wang J."/>
            <person name="Forst C."/>
            <person name="Hood L."/>
        </authorList>
    </citation>
    <scope>NUCLEOTIDE SEQUENCE [LARGE SCALE GENOMIC DNA]</scope>
    <source>
        <strain>35000HP / ATCC 700724</strain>
    </source>
</reference>
<proteinExistence type="inferred from homology"/>
<dbReference type="EMBL" id="AE017143">
    <property type="protein sequence ID" value="AAP95055.1"/>
    <property type="molecule type" value="Genomic_DNA"/>
</dbReference>
<dbReference type="RefSeq" id="WP_010944109.1">
    <property type="nucleotide sequence ID" value="NC_002940.2"/>
</dbReference>
<dbReference type="SMR" id="Q7VPM2"/>
<dbReference type="STRING" id="233412.HD_0040"/>
<dbReference type="KEGG" id="hdu:HD_0040"/>
<dbReference type="eggNOG" id="COG0706">
    <property type="taxonomic scope" value="Bacteria"/>
</dbReference>
<dbReference type="HOGENOM" id="CLU_016535_3_0_6"/>
<dbReference type="OrthoDB" id="9780552at2"/>
<dbReference type="Proteomes" id="UP000001022">
    <property type="component" value="Chromosome"/>
</dbReference>
<dbReference type="GO" id="GO:0005886">
    <property type="term" value="C:plasma membrane"/>
    <property type="evidence" value="ECO:0007669"/>
    <property type="project" value="UniProtKB-SubCell"/>
</dbReference>
<dbReference type="GO" id="GO:0032977">
    <property type="term" value="F:membrane insertase activity"/>
    <property type="evidence" value="ECO:0007669"/>
    <property type="project" value="InterPro"/>
</dbReference>
<dbReference type="GO" id="GO:0051205">
    <property type="term" value="P:protein insertion into membrane"/>
    <property type="evidence" value="ECO:0007669"/>
    <property type="project" value="TreeGrafter"/>
</dbReference>
<dbReference type="GO" id="GO:0015031">
    <property type="term" value="P:protein transport"/>
    <property type="evidence" value="ECO:0007669"/>
    <property type="project" value="UniProtKB-KW"/>
</dbReference>
<dbReference type="CDD" id="cd20070">
    <property type="entry name" value="5TM_YidC_Alb3"/>
    <property type="match status" value="1"/>
</dbReference>
<dbReference type="CDD" id="cd19961">
    <property type="entry name" value="EcYidC-like_peri"/>
    <property type="match status" value="1"/>
</dbReference>
<dbReference type="Gene3D" id="2.70.98.90">
    <property type="match status" value="1"/>
</dbReference>
<dbReference type="HAMAP" id="MF_01810">
    <property type="entry name" value="YidC_type1"/>
    <property type="match status" value="1"/>
</dbReference>
<dbReference type="InterPro" id="IPR019998">
    <property type="entry name" value="Membr_insert_YidC"/>
</dbReference>
<dbReference type="InterPro" id="IPR028053">
    <property type="entry name" value="Membr_insert_YidC_N"/>
</dbReference>
<dbReference type="InterPro" id="IPR001708">
    <property type="entry name" value="YidC/ALB3/OXA1/COX18"/>
</dbReference>
<dbReference type="InterPro" id="IPR028055">
    <property type="entry name" value="YidC/Oxa/ALB_C"/>
</dbReference>
<dbReference type="InterPro" id="IPR047196">
    <property type="entry name" value="YidC_ALB_C"/>
</dbReference>
<dbReference type="InterPro" id="IPR038221">
    <property type="entry name" value="YidC_periplasmic_sf"/>
</dbReference>
<dbReference type="NCBIfam" id="NF002351">
    <property type="entry name" value="PRK01318.1-1"/>
    <property type="match status" value="1"/>
</dbReference>
<dbReference type="NCBIfam" id="NF002352">
    <property type="entry name" value="PRK01318.1-3"/>
    <property type="match status" value="1"/>
</dbReference>
<dbReference type="NCBIfam" id="TIGR03593">
    <property type="entry name" value="yidC_nterm"/>
    <property type="match status" value="1"/>
</dbReference>
<dbReference type="NCBIfam" id="TIGR03592">
    <property type="entry name" value="yidC_oxa1_cterm"/>
    <property type="match status" value="1"/>
</dbReference>
<dbReference type="PANTHER" id="PTHR12428:SF65">
    <property type="entry name" value="CYTOCHROME C OXIDASE ASSEMBLY PROTEIN COX18, MITOCHONDRIAL"/>
    <property type="match status" value="1"/>
</dbReference>
<dbReference type="PANTHER" id="PTHR12428">
    <property type="entry name" value="OXA1"/>
    <property type="match status" value="1"/>
</dbReference>
<dbReference type="Pfam" id="PF02096">
    <property type="entry name" value="60KD_IMP"/>
    <property type="match status" value="1"/>
</dbReference>
<dbReference type="Pfam" id="PF14849">
    <property type="entry name" value="YidC_periplas"/>
    <property type="match status" value="1"/>
</dbReference>
<dbReference type="PRINTS" id="PR00701">
    <property type="entry name" value="60KDINNERMP"/>
</dbReference>
<dbReference type="PRINTS" id="PR01900">
    <property type="entry name" value="YIDCPROTEIN"/>
</dbReference>
<protein>
    <recommendedName>
        <fullName evidence="1">Membrane protein insertase YidC</fullName>
    </recommendedName>
    <alternativeName>
        <fullName evidence="1">Foldase YidC</fullName>
    </alternativeName>
    <alternativeName>
        <fullName evidence="1">Membrane integrase YidC</fullName>
    </alternativeName>
    <alternativeName>
        <fullName evidence="1">Membrane protein YidC</fullName>
    </alternativeName>
</protein>
<feature type="chain" id="PRO_0000124715" description="Membrane protein insertase YidC">
    <location>
        <begin position="1"/>
        <end position="536"/>
    </location>
</feature>
<feature type="transmembrane region" description="Helical" evidence="1">
    <location>
        <begin position="7"/>
        <end position="27"/>
    </location>
</feature>
<feature type="transmembrane region" description="Helical" evidence="1">
    <location>
        <begin position="332"/>
        <end position="352"/>
    </location>
</feature>
<feature type="transmembrane region" description="Helical" evidence="1">
    <location>
        <begin position="411"/>
        <end position="431"/>
    </location>
</feature>
<feature type="transmembrane region" description="Helical" evidence="1">
    <location>
        <begin position="449"/>
        <end position="469"/>
    </location>
</feature>
<feature type="transmembrane region" description="Helical" evidence="1">
    <location>
        <begin position="488"/>
        <end position="508"/>
    </location>
</feature>
<keyword id="KW-0997">Cell inner membrane</keyword>
<keyword id="KW-1003">Cell membrane</keyword>
<keyword id="KW-0143">Chaperone</keyword>
<keyword id="KW-0472">Membrane</keyword>
<keyword id="KW-0653">Protein transport</keyword>
<keyword id="KW-1185">Reference proteome</keyword>
<keyword id="KW-0812">Transmembrane</keyword>
<keyword id="KW-1133">Transmembrane helix</keyword>
<keyword id="KW-0813">Transport</keyword>
<evidence type="ECO:0000255" key="1">
    <source>
        <dbReference type="HAMAP-Rule" id="MF_01810"/>
    </source>
</evidence>
<name>YIDC_HAEDU</name>